<feature type="transit peptide" description="Mitochondrion" evidence="1">
    <location>
        <begin position="1"/>
        <end position="33"/>
    </location>
</feature>
<feature type="chain" id="PRO_0000251826" description="NADH dehydrogenase [ubiquinone] 1 beta subcomplex subunit 2, mitochondrial">
    <location>
        <begin position="34"/>
        <end position="105"/>
    </location>
</feature>
<feature type="region of interest" description="Disordered" evidence="3">
    <location>
        <begin position="85"/>
        <end position="105"/>
    </location>
</feature>
<feature type="compositionally biased region" description="Acidic residues" evidence="3">
    <location>
        <begin position="93"/>
        <end position="105"/>
    </location>
</feature>
<gene>
    <name type="primary">NDUFB2</name>
</gene>
<dbReference type="EMBL" id="DQ885705">
    <property type="protein sequence ID" value="ABH12214.1"/>
    <property type="molecule type" value="mRNA"/>
</dbReference>
<dbReference type="RefSeq" id="NP_001065266.1">
    <property type="nucleotide sequence ID" value="NM_001071798.1"/>
</dbReference>
<dbReference type="RefSeq" id="XP_009452505.1">
    <property type="nucleotide sequence ID" value="XM_009454230.2"/>
</dbReference>
<dbReference type="RefSeq" id="XP_016800956.2">
    <property type="nucleotide sequence ID" value="XM_016945467.4"/>
</dbReference>
<dbReference type="RefSeq" id="XP_054543117.1">
    <property type="nucleotide sequence ID" value="XM_054687142.2"/>
</dbReference>
<dbReference type="SMR" id="Q0MQC9"/>
<dbReference type="FunCoup" id="Q0MQC9">
    <property type="interactions" value="475"/>
</dbReference>
<dbReference type="STRING" id="9598.ENSPTRP00000033870"/>
<dbReference type="PaxDb" id="9598-ENSPTRP00000033870"/>
<dbReference type="Ensembl" id="ENSPTRT00000036630.5">
    <property type="protein sequence ID" value="ENSPTRP00000033870.4"/>
    <property type="gene ID" value="ENSPTRG00000019771.6"/>
</dbReference>
<dbReference type="GeneID" id="463780"/>
<dbReference type="KEGG" id="ptr:463780"/>
<dbReference type="CTD" id="4708"/>
<dbReference type="VGNC" id="VGNC:4441">
    <property type="gene designation" value="NDUFB2"/>
</dbReference>
<dbReference type="eggNOG" id="ENOG502S524">
    <property type="taxonomic scope" value="Eukaryota"/>
</dbReference>
<dbReference type="GeneTree" id="ENSGT00390000004044"/>
<dbReference type="HOGENOM" id="CLU_177133_1_0_1"/>
<dbReference type="InParanoid" id="Q0MQC9"/>
<dbReference type="OMA" id="WHGPARI"/>
<dbReference type="OrthoDB" id="11492at9604"/>
<dbReference type="TreeFam" id="TF316619"/>
<dbReference type="Proteomes" id="UP000002277">
    <property type="component" value="Chromosome 7"/>
</dbReference>
<dbReference type="Bgee" id="ENSPTRG00000019771">
    <property type="expression patterns" value="Expressed in skeletal muscle tissue and 21 other cell types or tissues"/>
</dbReference>
<dbReference type="GO" id="GO:0005743">
    <property type="term" value="C:mitochondrial inner membrane"/>
    <property type="evidence" value="ECO:0007669"/>
    <property type="project" value="UniProtKB-SubCell"/>
</dbReference>
<dbReference type="GO" id="GO:0045271">
    <property type="term" value="C:respiratory chain complex I"/>
    <property type="evidence" value="ECO:0000250"/>
    <property type="project" value="UniProtKB"/>
</dbReference>
<dbReference type="GO" id="GO:0032981">
    <property type="term" value="P:mitochondrial respiratory chain complex I assembly"/>
    <property type="evidence" value="ECO:0000318"/>
    <property type="project" value="GO_Central"/>
</dbReference>
<dbReference type="InterPro" id="IPR026627">
    <property type="entry name" value="NDUFB2_animal"/>
</dbReference>
<dbReference type="PANTHER" id="PTHR15223:SF1">
    <property type="entry name" value="NADH DEHYDROGENASE [UBIQUINONE] 1 BETA SUBCOMPLEX SUBUNIT 2, MITOCHONDRIAL"/>
    <property type="match status" value="1"/>
</dbReference>
<dbReference type="PANTHER" id="PTHR15223">
    <property type="entry name" value="NADH-UBIQUINONE OXIDOREDUCTASE AGGG SUBUNIT"/>
    <property type="match status" value="1"/>
</dbReference>
<dbReference type="Pfam" id="PF14813">
    <property type="entry name" value="NADH_B2"/>
    <property type="match status" value="1"/>
</dbReference>
<protein>
    <recommendedName>
        <fullName>NADH dehydrogenase [ubiquinone] 1 beta subcomplex subunit 2, mitochondrial</fullName>
    </recommendedName>
    <alternativeName>
        <fullName>Complex I-AGGG</fullName>
        <shortName>CI-AGGG</shortName>
    </alternativeName>
    <alternativeName>
        <fullName>NADH-ubiquinone oxidoreductase AGGG subunit</fullName>
    </alternativeName>
</protein>
<organism>
    <name type="scientific">Pan troglodytes</name>
    <name type="common">Chimpanzee</name>
    <dbReference type="NCBI Taxonomy" id="9598"/>
    <lineage>
        <taxon>Eukaryota</taxon>
        <taxon>Metazoa</taxon>
        <taxon>Chordata</taxon>
        <taxon>Craniata</taxon>
        <taxon>Vertebrata</taxon>
        <taxon>Euteleostomi</taxon>
        <taxon>Mammalia</taxon>
        <taxon>Eutheria</taxon>
        <taxon>Euarchontoglires</taxon>
        <taxon>Primates</taxon>
        <taxon>Haplorrhini</taxon>
        <taxon>Catarrhini</taxon>
        <taxon>Hominidae</taxon>
        <taxon>Pan</taxon>
    </lineage>
</organism>
<accession>Q0MQC9</accession>
<reference key="1">
    <citation type="journal article" date="2006" name="Gene">
        <title>Adaptive selection of mitochondrial complex I subunits during primate radiation.</title>
        <authorList>
            <person name="Mishmar D."/>
            <person name="Ruiz-Pesini E."/>
            <person name="Mondragon-Palomino M."/>
            <person name="Procaccio V."/>
            <person name="Gaut B."/>
            <person name="Wallace D.C."/>
        </authorList>
    </citation>
    <scope>NUCLEOTIDE SEQUENCE [MRNA]</scope>
</reference>
<proteinExistence type="inferred from homology"/>
<keyword id="KW-0249">Electron transport</keyword>
<keyword id="KW-0472">Membrane</keyword>
<keyword id="KW-0496">Mitochondrion</keyword>
<keyword id="KW-0999">Mitochondrion inner membrane</keyword>
<keyword id="KW-1185">Reference proteome</keyword>
<keyword id="KW-0679">Respiratory chain</keyword>
<keyword id="KW-0809">Transit peptide</keyword>
<keyword id="KW-0813">Transport</keyword>
<evidence type="ECO:0000250" key="1"/>
<evidence type="ECO:0000250" key="2">
    <source>
        <dbReference type="UniProtKB" id="O95178"/>
    </source>
</evidence>
<evidence type="ECO:0000256" key="3">
    <source>
        <dbReference type="SAM" id="MobiDB-lite"/>
    </source>
</evidence>
<evidence type="ECO:0000305" key="4"/>
<sequence length="105" mass="12156">MSDLTRLASFARVGGRLFRSGRARTAGDGGVRHAGGGVHIEPRYRQFPQLTRSQVFQSEFFSGLMWFWILWRFWHDSEEVLGHFPYPDPSQWTDEELGIPPDDED</sequence>
<name>NDUB2_PANTR</name>
<comment type="function">
    <text evidence="2">Accessory subunit of the mitochondrial membrane respiratory chain NADH dehydrogenase (Complex I), that is believed not to be involved in catalysis. Complex I functions in the transfer of electrons from NADH to the respiratory chain. The immediate electron acceptor for the enzyme is believed to be ubiquinone.</text>
</comment>
<comment type="subunit">
    <text evidence="2">Complex I is composed of 45 different subunits.</text>
</comment>
<comment type="subcellular location">
    <subcellularLocation>
        <location evidence="2">Mitochondrion inner membrane</location>
        <topology evidence="2">Peripheral membrane protein</topology>
        <orientation evidence="2">Matrix side</orientation>
    </subcellularLocation>
</comment>
<comment type="similarity">
    <text evidence="4">Belongs to the complex I NDUFB2 subunit family.</text>
</comment>